<name>NUOH_LEPIC</name>
<feature type="chain" id="PRO_0000244922" description="NADH-quinone oxidoreductase subunit H">
    <location>
        <begin position="1"/>
        <end position="346"/>
    </location>
</feature>
<feature type="transmembrane region" description="Helical" evidence="1">
    <location>
        <begin position="6"/>
        <end position="26"/>
    </location>
</feature>
<feature type="transmembrane region" description="Helical" evidence="1">
    <location>
        <begin position="76"/>
        <end position="96"/>
    </location>
</feature>
<feature type="transmembrane region" description="Helical" evidence="1">
    <location>
        <begin position="128"/>
        <end position="148"/>
    </location>
</feature>
<feature type="transmembrane region" description="Helical" evidence="1">
    <location>
        <begin position="166"/>
        <end position="186"/>
    </location>
</feature>
<feature type="transmembrane region" description="Helical" evidence="1">
    <location>
        <begin position="198"/>
        <end position="218"/>
    </location>
</feature>
<feature type="transmembrane region" description="Helical" evidence="1">
    <location>
        <begin position="260"/>
        <end position="280"/>
    </location>
</feature>
<feature type="transmembrane region" description="Helical" evidence="1">
    <location>
        <begin position="289"/>
        <end position="309"/>
    </location>
</feature>
<feature type="transmembrane region" description="Helical" evidence="1">
    <location>
        <begin position="324"/>
        <end position="344"/>
    </location>
</feature>
<accession>Q72NT2</accession>
<gene>
    <name evidence="1" type="primary">nuoH</name>
    <name type="ordered locus">LIC_12747</name>
</gene>
<reference key="1">
    <citation type="journal article" date="2004" name="J. Bacteriol.">
        <title>Comparative genomics of two Leptospira interrogans serovars reveals novel insights into physiology and pathogenesis.</title>
        <authorList>
            <person name="Nascimento A.L.T.O."/>
            <person name="Ko A.I."/>
            <person name="Martins E.A.L."/>
            <person name="Monteiro-Vitorello C.B."/>
            <person name="Ho P.L."/>
            <person name="Haake D.A."/>
            <person name="Verjovski-Almeida S."/>
            <person name="Hartskeerl R.A."/>
            <person name="Marques M.V."/>
            <person name="Oliveira M.C."/>
            <person name="Menck C.F.M."/>
            <person name="Leite L.C.C."/>
            <person name="Carrer H."/>
            <person name="Coutinho L.L."/>
            <person name="Degrave W.M."/>
            <person name="Dellagostin O.A."/>
            <person name="El-Dorry H."/>
            <person name="Ferro E.S."/>
            <person name="Ferro M.I.T."/>
            <person name="Furlan L.R."/>
            <person name="Gamberini M."/>
            <person name="Giglioti E.A."/>
            <person name="Goes-Neto A."/>
            <person name="Goldman G.H."/>
            <person name="Goldman M.H.S."/>
            <person name="Harakava R."/>
            <person name="Jeronimo S.M.B."/>
            <person name="Junqueira-de-Azevedo I.L.M."/>
            <person name="Kimura E.T."/>
            <person name="Kuramae E.E."/>
            <person name="Lemos E.G.M."/>
            <person name="Lemos M.V.F."/>
            <person name="Marino C.L."/>
            <person name="Nunes L.R."/>
            <person name="de Oliveira R.C."/>
            <person name="Pereira G.G."/>
            <person name="Reis M.S."/>
            <person name="Schriefer A."/>
            <person name="Siqueira W.J."/>
            <person name="Sommer P."/>
            <person name="Tsai S.M."/>
            <person name="Simpson A.J.G."/>
            <person name="Ferro J.A."/>
            <person name="Camargo L.E.A."/>
            <person name="Kitajima J.P."/>
            <person name="Setubal J.C."/>
            <person name="Van Sluys M.A."/>
        </authorList>
    </citation>
    <scope>NUCLEOTIDE SEQUENCE [LARGE SCALE GENOMIC DNA]</scope>
    <source>
        <strain>Fiocruz L1-130</strain>
    </source>
</reference>
<comment type="function">
    <text evidence="1">NDH-1 shuttles electrons from NADH, via FMN and iron-sulfur (Fe-S) centers, to quinones in the respiratory chain. The immediate electron acceptor for the enzyme in this species is believed to be ubiquinone. Couples the redox reaction to proton translocation (for every two electrons transferred, four hydrogen ions are translocated across the cytoplasmic membrane), and thus conserves the redox energy in a proton gradient. This subunit may bind ubiquinone.</text>
</comment>
<comment type="catalytic activity">
    <reaction evidence="1">
        <text>a quinone + NADH + 5 H(+)(in) = a quinol + NAD(+) + 4 H(+)(out)</text>
        <dbReference type="Rhea" id="RHEA:57888"/>
        <dbReference type="ChEBI" id="CHEBI:15378"/>
        <dbReference type="ChEBI" id="CHEBI:24646"/>
        <dbReference type="ChEBI" id="CHEBI:57540"/>
        <dbReference type="ChEBI" id="CHEBI:57945"/>
        <dbReference type="ChEBI" id="CHEBI:132124"/>
    </reaction>
</comment>
<comment type="subunit">
    <text evidence="1">NDH-1 is composed of 14 different subunits. Subunits NuoA, H, J, K, L, M, N constitute the membrane sector of the complex.</text>
</comment>
<comment type="subcellular location">
    <subcellularLocation>
        <location evidence="1">Cell inner membrane</location>
        <topology evidence="1">Multi-pass membrane protein</topology>
    </subcellularLocation>
</comment>
<comment type="similarity">
    <text evidence="1">Belongs to the complex I subunit 1 family.</text>
</comment>
<proteinExistence type="inferred from homology"/>
<protein>
    <recommendedName>
        <fullName evidence="1">NADH-quinone oxidoreductase subunit H</fullName>
        <ecNumber evidence="1">7.1.1.-</ecNumber>
    </recommendedName>
    <alternativeName>
        <fullName evidence="1">NADH dehydrogenase I subunit H</fullName>
    </alternativeName>
    <alternativeName>
        <fullName evidence="1">NDH-1 subunit H</fullName>
    </alternativeName>
</protein>
<keyword id="KW-0997">Cell inner membrane</keyword>
<keyword id="KW-1003">Cell membrane</keyword>
<keyword id="KW-0472">Membrane</keyword>
<keyword id="KW-0520">NAD</keyword>
<keyword id="KW-0874">Quinone</keyword>
<keyword id="KW-1278">Translocase</keyword>
<keyword id="KW-0812">Transmembrane</keyword>
<keyword id="KW-1133">Transmembrane helix</keyword>
<keyword id="KW-0830">Ubiquinone</keyword>
<organism>
    <name type="scientific">Leptospira interrogans serogroup Icterohaemorrhagiae serovar copenhageni (strain Fiocruz L1-130)</name>
    <dbReference type="NCBI Taxonomy" id="267671"/>
    <lineage>
        <taxon>Bacteria</taxon>
        <taxon>Pseudomonadati</taxon>
        <taxon>Spirochaetota</taxon>
        <taxon>Spirochaetia</taxon>
        <taxon>Leptospirales</taxon>
        <taxon>Leptospiraceae</taxon>
        <taxon>Leptospira</taxon>
    </lineage>
</organism>
<evidence type="ECO:0000255" key="1">
    <source>
        <dbReference type="HAMAP-Rule" id="MF_01350"/>
    </source>
</evidence>
<dbReference type="EC" id="7.1.1.-" evidence="1"/>
<dbReference type="EMBL" id="AE016823">
    <property type="protein sequence ID" value="AAS71304.1"/>
    <property type="molecule type" value="Genomic_DNA"/>
</dbReference>
<dbReference type="RefSeq" id="WP_001104353.1">
    <property type="nucleotide sequence ID" value="NC_005823.1"/>
</dbReference>
<dbReference type="SMR" id="Q72NT2"/>
<dbReference type="GeneID" id="61142625"/>
<dbReference type="KEGG" id="lic:LIC_12747"/>
<dbReference type="HOGENOM" id="CLU_015134_0_1_12"/>
<dbReference type="Proteomes" id="UP000007037">
    <property type="component" value="Chromosome I"/>
</dbReference>
<dbReference type="GO" id="GO:0005886">
    <property type="term" value="C:plasma membrane"/>
    <property type="evidence" value="ECO:0007669"/>
    <property type="project" value="UniProtKB-SubCell"/>
</dbReference>
<dbReference type="GO" id="GO:0003954">
    <property type="term" value="F:NADH dehydrogenase activity"/>
    <property type="evidence" value="ECO:0007669"/>
    <property type="project" value="TreeGrafter"/>
</dbReference>
<dbReference type="GO" id="GO:0016655">
    <property type="term" value="F:oxidoreductase activity, acting on NAD(P)H, quinone or similar compound as acceptor"/>
    <property type="evidence" value="ECO:0007669"/>
    <property type="project" value="UniProtKB-UniRule"/>
</dbReference>
<dbReference type="GO" id="GO:0048038">
    <property type="term" value="F:quinone binding"/>
    <property type="evidence" value="ECO:0007669"/>
    <property type="project" value="UniProtKB-KW"/>
</dbReference>
<dbReference type="GO" id="GO:0009060">
    <property type="term" value="P:aerobic respiration"/>
    <property type="evidence" value="ECO:0007669"/>
    <property type="project" value="TreeGrafter"/>
</dbReference>
<dbReference type="HAMAP" id="MF_01350">
    <property type="entry name" value="NDH1_NuoH"/>
    <property type="match status" value="1"/>
</dbReference>
<dbReference type="InterPro" id="IPR001694">
    <property type="entry name" value="NADH_UbQ_OxRdtase_su1/FPO"/>
</dbReference>
<dbReference type="InterPro" id="IPR018086">
    <property type="entry name" value="NADH_UbQ_OxRdtase_su1_CS"/>
</dbReference>
<dbReference type="NCBIfam" id="NF004741">
    <property type="entry name" value="PRK06076.1-2"/>
    <property type="match status" value="1"/>
</dbReference>
<dbReference type="PANTHER" id="PTHR11432">
    <property type="entry name" value="NADH DEHYDROGENASE SUBUNIT 1"/>
    <property type="match status" value="1"/>
</dbReference>
<dbReference type="PANTHER" id="PTHR11432:SF3">
    <property type="entry name" value="NADH-UBIQUINONE OXIDOREDUCTASE CHAIN 1"/>
    <property type="match status" value="1"/>
</dbReference>
<dbReference type="Pfam" id="PF00146">
    <property type="entry name" value="NADHdh"/>
    <property type="match status" value="1"/>
</dbReference>
<dbReference type="PROSITE" id="PS00668">
    <property type="entry name" value="COMPLEX1_ND1_2"/>
    <property type="match status" value="1"/>
</dbReference>
<sequence length="346" mass="38964">MNWNEILFWLLKSGLFFFILITACAYYTLAERKVAGFIQDRKGPNRAGFWGLLQPLADGIKFLTKEEVFPVQVNKVMYLIAPAISMTCAIMAWSVVPLGGQIPLPSWLQEKTGLTFLDLQIANPDTGILFLFAISSLAVYGIIIAGWASNNKYSLLGAVRSTAQMISYELPLGMSVVSIVILSGSLRLTDISASQVGLWNIFKLPGFIAFCLFVVAMFAETNRLPFDLAEAESELVVGFHTEYGAFKFALFFIAEYMNMITMSCVVTLLFFGGYQVPFGILEGHVLQPLFGLVFFLGKVLFFTFLFLWVRWTLPRFRYDQLMSLGWKKLIPWAILNILIASIYIQF</sequence>